<comment type="function">
    <text>Shows antibacterial activity against S.aureus and S.uberis.</text>
</comment>
<comment type="subcellular location">
    <subcellularLocation>
        <location>Secreted</location>
    </subcellularLocation>
</comment>
<comment type="tissue specificity">
    <text>Expressed by the skin dorsal glands.</text>
</comment>
<comment type="mass spectrometry" mass="2360.0" method="FAB" evidence="1"/>
<protein>
    <recommendedName>
        <fullName>Maculatin-1.2</fullName>
    </recommendedName>
</protein>
<sequence length="23" mass="2362">GLFGVLAKVASHVVPAIAEHFQA</sequence>
<name>MCU12_RANGE</name>
<dbReference type="GO" id="GO:0005576">
    <property type="term" value="C:extracellular region"/>
    <property type="evidence" value="ECO:0007669"/>
    <property type="project" value="UniProtKB-SubCell"/>
</dbReference>
<dbReference type="GO" id="GO:0042742">
    <property type="term" value="P:defense response to bacterium"/>
    <property type="evidence" value="ECO:0007669"/>
    <property type="project" value="UniProtKB-KW"/>
</dbReference>
<feature type="peptide" id="PRO_0000043811" description="Maculatin-1.2">
    <location>
        <begin position="1"/>
        <end position="23"/>
    </location>
</feature>
<feature type="modified residue" description="Alanine amide" evidence="1">
    <location>
        <position position="23"/>
    </location>
</feature>
<evidence type="ECO:0000269" key="1">
    <source>
    </source>
</evidence>
<organism>
    <name type="scientific">Ranoidea genimaculata</name>
    <name type="common">Brown-spotted tree frog</name>
    <name type="synonym">Litoria genimaculata</name>
    <dbReference type="NCBI Taxonomy" id="95132"/>
    <lineage>
        <taxon>Eukaryota</taxon>
        <taxon>Metazoa</taxon>
        <taxon>Chordata</taxon>
        <taxon>Craniata</taxon>
        <taxon>Vertebrata</taxon>
        <taxon>Euteleostomi</taxon>
        <taxon>Amphibia</taxon>
        <taxon>Batrachia</taxon>
        <taxon>Anura</taxon>
        <taxon>Neobatrachia</taxon>
        <taxon>Hyloidea</taxon>
        <taxon>Hylidae</taxon>
        <taxon>Pelodryadinae</taxon>
        <taxon>Ranoidea</taxon>
    </lineage>
</organism>
<proteinExistence type="evidence at protein level"/>
<accession>P82067</accession>
<keyword id="KW-0027">Amidation</keyword>
<keyword id="KW-0878">Amphibian defense peptide</keyword>
<keyword id="KW-0044">Antibiotic</keyword>
<keyword id="KW-0929">Antimicrobial</keyword>
<keyword id="KW-0903">Direct protein sequencing</keyword>
<keyword id="KW-0964">Secreted</keyword>
<reference key="1">
    <citation type="journal article" date="1998" name="J. Pept. Sci.">
        <title>The maculatin peptides from the skin glands of the tree frog Litoria genimaculata. A comparison of the structures and antibacterial activities of maculatin 1.1 and caerin 1.1.</title>
        <authorList>
            <person name="Rozek T."/>
            <person name="Waugh R.J."/>
            <person name="Steinborner S.T."/>
            <person name="Bowie J.H."/>
            <person name="Tyler M.J."/>
            <person name="Wallace J.C."/>
        </authorList>
    </citation>
    <scope>PROTEIN SEQUENCE</scope>
    <scope>AMIDATION AT ALA-23</scope>
    <scope>MASS SPECTROMETRY</scope>
    <source>
        <tissue>Skin secretion</tissue>
    </source>
</reference>